<protein>
    <recommendedName>
        <fullName evidence="1">Lipid-A-disaccharide synthase</fullName>
        <ecNumber evidence="1">2.4.1.182</ecNumber>
    </recommendedName>
</protein>
<accession>Q39T49</accession>
<name>LPXB_GEOMG</name>
<evidence type="ECO:0000255" key="1">
    <source>
        <dbReference type="HAMAP-Rule" id="MF_00392"/>
    </source>
</evidence>
<comment type="function">
    <text evidence="1">Condensation of UDP-2,3-diacylglucosamine and 2,3-diacylglucosamine-1-phosphate to form lipid A disaccharide, a precursor of lipid A, a phosphorylated glycolipid that anchors the lipopolysaccharide to the outer membrane of the cell.</text>
</comment>
<comment type="catalytic activity">
    <reaction evidence="1">
        <text>a lipid X + a UDP-2-N,3-O-bis[(3R)-3-hydroxyacyl]-alpha-D-glucosamine = a lipid A disaccharide + UDP + H(+)</text>
        <dbReference type="Rhea" id="RHEA:67828"/>
        <dbReference type="ChEBI" id="CHEBI:15378"/>
        <dbReference type="ChEBI" id="CHEBI:58223"/>
        <dbReference type="ChEBI" id="CHEBI:137748"/>
        <dbReference type="ChEBI" id="CHEBI:176338"/>
        <dbReference type="ChEBI" id="CHEBI:176343"/>
        <dbReference type="EC" id="2.4.1.182"/>
    </reaction>
</comment>
<comment type="pathway">
    <text evidence="1">Bacterial outer membrane biogenesis; LPS lipid A biosynthesis.</text>
</comment>
<comment type="similarity">
    <text evidence="1">Belongs to the LpxB family.</text>
</comment>
<feature type="chain" id="PRO_0000255183" description="Lipid-A-disaccharide synthase">
    <location>
        <begin position="1"/>
        <end position="384"/>
    </location>
</feature>
<gene>
    <name evidence="1" type="primary">lpxB</name>
    <name type="ordered locus">Gmet_2350</name>
</gene>
<reference key="1">
    <citation type="journal article" date="2009" name="BMC Microbiol.">
        <title>The genome sequence of Geobacter metallireducens: features of metabolism, physiology and regulation common and dissimilar to Geobacter sulfurreducens.</title>
        <authorList>
            <person name="Aklujkar M."/>
            <person name="Krushkal J."/>
            <person name="DiBartolo G."/>
            <person name="Lapidus A."/>
            <person name="Land M.L."/>
            <person name="Lovley D.R."/>
        </authorList>
    </citation>
    <scope>NUCLEOTIDE SEQUENCE [LARGE SCALE GENOMIC DNA]</scope>
    <source>
        <strain>ATCC 53774 / DSM 7210 / GS-15</strain>
    </source>
</reference>
<dbReference type="EC" id="2.4.1.182" evidence="1"/>
<dbReference type="EMBL" id="CP000148">
    <property type="protein sequence ID" value="ABB32575.1"/>
    <property type="molecule type" value="Genomic_DNA"/>
</dbReference>
<dbReference type="RefSeq" id="WP_011366042.1">
    <property type="nucleotide sequence ID" value="NC_007517.1"/>
</dbReference>
<dbReference type="SMR" id="Q39T49"/>
<dbReference type="STRING" id="269799.Gmet_2350"/>
<dbReference type="CAZy" id="GT19">
    <property type="family name" value="Glycosyltransferase Family 19"/>
</dbReference>
<dbReference type="KEGG" id="gme:Gmet_2350"/>
<dbReference type="eggNOG" id="COG0763">
    <property type="taxonomic scope" value="Bacteria"/>
</dbReference>
<dbReference type="HOGENOM" id="CLU_036577_3_1_7"/>
<dbReference type="UniPathway" id="UPA00973"/>
<dbReference type="Proteomes" id="UP000007073">
    <property type="component" value="Chromosome"/>
</dbReference>
<dbReference type="GO" id="GO:0016020">
    <property type="term" value="C:membrane"/>
    <property type="evidence" value="ECO:0007669"/>
    <property type="project" value="GOC"/>
</dbReference>
<dbReference type="GO" id="GO:0008915">
    <property type="term" value="F:lipid-A-disaccharide synthase activity"/>
    <property type="evidence" value="ECO:0007669"/>
    <property type="project" value="UniProtKB-UniRule"/>
</dbReference>
<dbReference type="GO" id="GO:0005543">
    <property type="term" value="F:phospholipid binding"/>
    <property type="evidence" value="ECO:0007669"/>
    <property type="project" value="TreeGrafter"/>
</dbReference>
<dbReference type="GO" id="GO:0009245">
    <property type="term" value="P:lipid A biosynthetic process"/>
    <property type="evidence" value="ECO:0007669"/>
    <property type="project" value="UniProtKB-UniRule"/>
</dbReference>
<dbReference type="HAMAP" id="MF_00392">
    <property type="entry name" value="LpxB"/>
    <property type="match status" value="1"/>
</dbReference>
<dbReference type="InterPro" id="IPR003835">
    <property type="entry name" value="Glyco_trans_19"/>
</dbReference>
<dbReference type="NCBIfam" id="TIGR00215">
    <property type="entry name" value="lpxB"/>
    <property type="match status" value="1"/>
</dbReference>
<dbReference type="PANTHER" id="PTHR30372">
    <property type="entry name" value="LIPID-A-DISACCHARIDE SYNTHASE"/>
    <property type="match status" value="1"/>
</dbReference>
<dbReference type="PANTHER" id="PTHR30372:SF4">
    <property type="entry name" value="LIPID-A-DISACCHARIDE SYNTHASE, MITOCHONDRIAL-RELATED"/>
    <property type="match status" value="1"/>
</dbReference>
<dbReference type="Pfam" id="PF02684">
    <property type="entry name" value="LpxB"/>
    <property type="match status" value="1"/>
</dbReference>
<dbReference type="SUPFAM" id="SSF53756">
    <property type="entry name" value="UDP-Glycosyltransferase/glycogen phosphorylase"/>
    <property type="match status" value="1"/>
</dbReference>
<sequence>MGTAPNKRVMIVAGEASGDLHGSNLVKEALRLDPTLSFFGIGGPHMRAAGVETVVDSSEMAVVGLVEVLAHFGVIYKAYATLKRLITTNPPDLLILIDYPDFNMLVAKVAKRAGVKVLYYISPQVWAWRTGRVKKIARLVDRMAVVFPFEVPFYEKAGVPVSFVGHPLADRVSPSMSRSEALAAFGLDPSRRVVGLFPGSRRGEIARLFPVILESAKLLRDRYPGIQFILPLASSLTDADIAPHLAASGLEVVVARDKVYDVMQVCDAIATVSGTVTLEIALMGVPMVIIYTVSPLTYEVGKRLIRVDHIGICNIVAGERVVPELIQDEATAERIAAEIGRYLDDPVHTEKTRAGLARVREKLGSGGCSERVAGIVLEMLGKKR</sequence>
<keyword id="KW-0328">Glycosyltransferase</keyword>
<keyword id="KW-0441">Lipid A biosynthesis</keyword>
<keyword id="KW-0444">Lipid biosynthesis</keyword>
<keyword id="KW-0443">Lipid metabolism</keyword>
<keyword id="KW-1185">Reference proteome</keyword>
<keyword id="KW-0808">Transferase</keyword>
<proteinExistence type="inferred from homology"/>
<organism>
    <name type="scientific">Geobacter metallireducens (strain ATCC 53774 / DSM 7210 / GS-15)</name>
    <dbReference type="NCBI Taxonomy" id="269799"/>
    <lineage>
        <taxon>Bacteria</taxon>
        <taxon>Pseudomonadati</taxon>
        <taxon>Thermodesulfobacteriota</taxon>
        <taxon>Desulfuromonadia</taxon>
        <taxon>Geobacterales</taxon>
        <taxon>Geobacteraceae</taxon>
        <taxon>Geobacter</taxon>
    </lineage>
</organism>